<comment type="function">
    <text evidence="6 7">IGF-binding proteins prolong the half-life of the IGFs and have been shown to either inhibit or stimulate the growth promoting effects of the IGFs on cell culture. They alter the interaction of IGFs with their cell surface receptors. Promotes anterior neural development by stimulating insulin growth factor (IGF) signaling via IGF receptors.</text>
</comment>
<comment type="subcellular location">
    <subcellularLocation>
        <location evidence="6">Secreted</location>
    </subcellularLocation>
</comment>
<comment type="developmental stage">
    <text evidence="6">Expressed both maternally and zygotically. Expressed on the dorsal side during gastrulation. Becomes confined to the floor plate, notochord and dorsal endoderm during neurulation. Expressed in additional domains at the tailbud stage in cranial nerves, ear vesicle, dorsal fin and somites. Dorsal midline expression becomes restricted to the floor plate and hypochord.</text>
</comment>
<sequence>MEMLLPMCLLLVSLCLGQCQALGSFVHCEPCDDKAMSMCPPTPVGCELVKEPGCGCCMTCALAEGHRCGVYTEHCAKGLRCLPEQGEEKPLHALLHGRGVCLNLKNHRDQSKIDRESREEDPTTSETEDIYQSKHRGKMRLSDQKAIALNTFRQKKHSQSRIVSVEKVQSPSTPEHSIEIDMGPCRRQVETLMQEMKLSHRVYPRAFYLPNCDRKGFYKRKQCKPSRGRKRGLCWCVDKYGLKLPGIDYVNGDLQCHSFDSSNTE</sequence>
<evidence type="ECO:0000250" key="1">
    <source>
        <dbReference type="UniProtKB" id="P24593"/>
    </source>
</evidence>
<evidence type="ECO:0000255" key="2"/>
<evidence type="ECO:0000255" key="3">
    <source>
        <dbReference type="PROSITE-ProRule" id="PRU00500"/>
    </source>
</evidence>
<evidence type="ECO:0000255" key="4">
    <source>
        <dbReference type="PROSITE-ProRule" id="PRU00653"/>
    </source>
</evidence>
<evidence type="ECO:0000256" key="5">
    <source>
        <dbReference type="SAM" id="MobiDB-lite"/>
    </source>
</evidence>
<evidence type="ECO:0000269" key="6">
    <source>
    </source>
</evidence>
<evidence type="ECO:0000305" key="7"/>
<evidence type="ECO:0000312" key="8">
    <source>
        <dbReference type="EMBL" id="AAL12250.1"/>
    </source>
</evidence>
<protein>
    <recommendedName>
        <fullName>Insulin-like growth factor-binding protein 5</fullName>
        <shortName>IBP-5</shortName>
        <shortName>IGF-binding protein 5</shortName>
        <shortName>IGFBP-5</shortName>
        <shortName>xIGFBP-5</shortName>
    </recommendedName>
</protein>
<name>IBP5_XENLA</name>
<proteinExistence type="evidence at transcript level"/>
<accession>Q90WV8</accession>
<organism>
    <name type="scientific">Xenopus laevis</name>
    <name type="common">African clawed frog</name>
    <dbReference type="NCBI Taxonomy" id="8355"/>
    <lineage>
        <taxon>Eukaryota</taxon>
        <taxon>Metazoa</taxon>
        <taxon>Chordata</taxon>
        <taxon>Craniata</taxon>
        <taxon>Vertebrata</taxon>
        <taxon>Euteleostomi</taxon>
        <taxon>Amphibia</taxon>
        <taxon>Batrachia</taxon>
        <taxon>Anura</taxon>
        <taxon>Pipoidea</taxon>
        <taxon>Pipidae</taxon>
        <taxon>Xenopodinae</taxon>
        <taxon>Xenopus</taxon>
        <taxon>Xenopus</taxon>
    </lineage>
</organism>
<dbReference type="EMBL" id="AY052629">
    <property type="protein sequence ID" value="AAL12250.1"/>
    <property type="molecule type" value="mRNA"/>
</dbReference>
<dbReference type="SMR" id="Q90WV8"/>
<dbReference type="MEROPS" id="I31.952"/>
<dbReference type="KEGG" id="xla:399201"/>
<dbReference type="AGR" id="Xenbase:XB-GENE-485077"/>
<dbReference type="CTD" id="399201"/>
<dbReference type="Xenbase" id="XB-GENE-485077">
    <property type="gene designation" value="igfbp5.L"/>
</dbReference>
<dbReference type="OMA" id="YTERCAL"/>
<dbReference type="OrthoDB" id="6068400at2759"/>
<dbReference type="Proteomes" id="UP000186698">
    <property type="component" value="Chromosome 9_10L"/>
</dbReference>
<dbReference type="Bgee" id="399201">
    <property type="expression patterns" value="Expressed in internal ear and 19 other cell types or tissues"/>
</dbReference>
<dbReference type="GO" id="GO:0005576">
    <property type="term" value="C:extracellular region"/>
    <property type="evidence" value="ECO:0000314"/>
    <property type="project" value="UniProtKB"/>
</dbReference>
<dbReference type="GO" id="GO:0005615">
    <property type="term" value="C:extracellular space"/>
    <property type="evidence" value="ECO:0000318"/>
    <property type="project" value="GO_Central"/>
</dbReference>
<dbReference type="GO" id="GO:0001968">
    <property type="term" value="F:fibronectin binding"/>
    <property type="evidence" value="ECO:0000318"/>
    <property type="project" value="GO_Central"/>
</dbReference>
<dbReference type="GO" id="GO:0031994">
    <property type="term" value="F:insulin-like growth factor I binding"/>
    <property type="evidence" value="ECO:0000318"/>
    <property type="project" value="GO_Central"/>
</dbReference>
<dbReference type="GO" id="GO:0031995">
    <property type="term" value="F:insulin-like growth factor II binding"/>
    <property type="evidence" value="ECO:0000318"/>
    <property type="project" value="GO_Central"/>
</dbReference>
<dbReference type="GO" id="GO:0009952">
    <property type="term" value="P:anterior/posterior pattern specification"/>
    <property type="evidence" value="ECO:0000315"/>
    <property type="project" value="UniProtKB"/>
</dbReference>
<dbReference type="GO" id="GO:0048009">
    <property type="term" value="P:insulin-like growth factor receptor signaling pathway"/>
    <property type="evidence" value="ECO:0000314"/>
    <property type="project" value="UniProtKB"/>
</dbReference>
<dbReference type="GO" id="GO:0007399">
    <property type="term" value="P:nervous system development"/>
    <property type="evidence" value="ECO:0000315"/>
    <property type="project" value="UniProtKB"/>
</dbReference>
<dbReference type="GO" id="GO:0043567">
    <property type="term" value="P:regulation of insulin-like growth factor receptor signaling pathway"/>
    <property type="evidence" value="ECO:0000318"/>
    <property type="project" value="GO_Central"/>
</dbReference>
<dbReference type="CDD" id="cd00191">
    <property type="entry name" value="TY"/>
    <property type="match status" value="1"/>
</dbReference>
<dbReference type="FunFam" id="4.10.40.20:FF:000001">
    <property type="entry name" value="Insulin-like growth factor binding protein 5"/>
    <property type="match status" value="1"/>
</dbReference>
<dbReference type="FunFam" id="4.10.800.10:FF:000009">
    <property type="entry name" value="Insulin-like growth factor binding protein 5"/>
    <property type="match status" value="1"/>
</dbReference>
<dbReference type="Gene3D" id="4.10.40.20">
    <property type="match status" value="1"/>
</dbReference>
<dbReference type="Gene3D" id="4.10.800.10">
    <property type="entry name" value="Thyroglobulin type-1"/>
    <property type="match status" value="1"/>
</dbReference>
<dbReference type="InterPro" id="IPR009030">
    <property type="entry name" value="Growth_fac_rcpt_cys_sf"/>
</dbReference>
<dbReference type="InterPro" id="IPR012213">
    <property type="entry name" value="IGFBP-5"/>
</dbReference>
<dbReference type="InterPro" id="IPR000867">
    <property type="entry name" value="IGFBP-like"/>
</dbReference>
<dbReference type="InterPro" id="IPR022321">
    <property type="entry name" value="IGFBP_1-6_chordata"/>
</dbReference>
<dbReference type="InterPro" id="IPR017891">
    <property type="entry name" value="Insulin_GF-bd_Cys-rich_CS"/>
</dbReference>
<dbReference type="InterPro" id="IPR000716">
    <property type="entry name" value="Thyroglobulin_1"/>
</dbReference>
<dbReference type="InterPro" id="IPR036857">
    <property type="entry name" value="Thyroglobulin_1_sf"/>
</dbReference>
<dbReference type="PANTHER" id="PTHR11551">
    <property type="entry name" value="INSULIN-LIKE GROWTH FACTOR BINDING PROTEIN"/>
    <property type="match status" value="1"/>
</dbReference>
<dbReference type="PANTHER" id="PTHR11551:SF4">
    <property type="entry name" value="INSULIN-LIKE GROWTH FACTOR-BINDING PROTEIN 5"/>
    <property type="match status" value="1"/>
</dbReference>
<dbReference type="Pfam" id="PF00219">
    <property type="entry name" value="IGFBP"/>
    <property type="match status" value="1"/>
</dbReference>
<dbReference type="Pfam" id="PF00086">
    <property type="entry name" value="Thyroglobulin_1"/>
    <property type="match status" value="1"/>
</dbReference>
<dbReference type="PRINTS" id="PR01976">
    <property type="entry name" value="IGFBPFAMILY"/>
</dbReference>
<dbReference type="PRINTS" id="PR01981">
    <property type="entry name" value="IGFBPFAMILY5"/>
</dbReference>
<dbReference type="SMART" id="SM00121">
    <property type="entry name" value="IB"/>
    <property type="match status" value="1"/>
</dbReference>
<dbReference type="SMART" id="SM00211">
    <property type="entry name" value="TY"/>
    <property type="match status" value="1"/>
</dbReference>
<dbReference type="SUPFAM" id="SSF57184">
    <property type="entry name" value="Growth factor receptor domain"/>
    <property type="match status" value="1"/>
</dbReference>
<dbReference type="SUPFAM" id="SSF57610">
    <property type="entry name" value="Thyroglobulin type-1 domain"/>
    <property type="match status" value="1"/>
</dbReference>
<dbReference type="PROSITE" id="PS00222">
    <property type="entry name" value="IGFBP_N_1"/>
    <property type="match status" value="1"/>
</dbReference>
<dbReference type="PROSITE" id="PS51323">
    <property type="entry name" value="IGFBP_N_2"/>
    <property type="match status" value="1"/>
</dbReference>
<dbReference type="PROSITE" id="PS00484">
    <property type="entry name" value="THYROGLOBULIN_1_1"/>
    <property type="match status" value="1"/>
</dbReference>
<dbReference type="PROSITE" id="PS51162">
    <property type="entry name" value="THYROGLOBULIN_1_2"/>
    <property type="match status" value="1"/>
</dbReference>
<keyword id="KW-0217">Developmental protein</keyword>
<keyword id="KW-1015">Disulfide bond</keyword>
<keyword id="KW-0340">Growth factor binding</keyword>
<keyword id="KW-1185">Reference proteome</keyword>
<keyword id="KW-0964">Secreted</keyword>
<keyword id="KW-0732">Signal</keyword>
<reference evidence="7 8" key="1">
    <citation type="journal article" date="2001" name="Dev. Cell">
        <title>Neural and head induction by insulin-like growth factor signals.</title>
        <authorList>
            <person name="Pera E.M."/>
            <person name="Wessely O."/>
            <person name="Li S.-Y."/>
            <person name="De Robertis E.M."/>
        </authorList>
    </citation>
    <scope>NUCLEOTIDE SEQUENCE [MRNA]</scope>
    <scope>FUNCTION</scope>
    <scope>SUBCELLULAR LOCATION</scope>
    <scope>DEVELOPMENTAL STAGE</scope>
    <source>
        <tissue evidence="6">Embryo</tissue>
    </source>
</reference>
<gene>
    <name evidence="8" type="primary">igfbp5</name>
</gene>
<feature type="signal peptide" evidence="2">
    <location>
        <begin position="1"/>
        <end position="21"/>
    </location>
</feature>
<feature type="chain" id="PRO_0000223894" description="Insulin-like growth factor-binding protein 5">
    <location>
        <begin position="22"/>
        <end position="265"/>
    </location>
</feature>
<feature type="domain" description="IGFBP N-terminal" evidence="4">
    <location>
        <begin position="24"/>
        <end position="104"/>
    </location>
</feature>
<feature type="domain" description="Thyroglobulin type-1" evidence="3">
    <location>
        <begin position="182"/>
        <end position="256"/>
    </location>
</feature>
<feature type="region of interest" description="Disordered" evidence="5">
    <location>
        <begin position="111"/>
        <end position="137"/>
    </location>
</feature>
<feature type="compositionally biased region" description="Basic and acidic residues" evidence="5">
    <location>
        <begin position="111"/>
        <end position="121"/>
    </location>
</feature>
<feature type="disulfide bond" evidence="4">
    <location>
        <begin position="28"/>
        <end position="54"/>
    </location>
</feature>
<feature type="disulfide bond" evidence="4">
    <location>
        <begin position="31"/>
        <end position="56"/>
    </location>
</feature>
<feature type="disulfide bond" evidence="4">
    <location>
        <begin position="39"/>
        <end position="57"/>
    </location>
</feature>
<feature type="disulfide bond" evidence="4">
    <location>
        <begin position="46"/>
        <end position="60"/>
    </location>
</feature>
<feature type="disulfide bond" evidence="4">
    <location>
        <begin position="68"/>
        <end position="81"/>
    </location>
</feature>
<feature type="disulfide bond" evidence="4">
    <location>
        <begin position="75"/>
        <end position="101"/>
    </location>
</feature>
<feature type="disulfide bond" evidence="1 3">
    <location>
        <begin position="185"/>
        <end position="212"/>
    </location>
</feature>
<feature type="disulfide bond" evidence="1 3">
    <location>
        <begin position="223"/>
        <end position="234"/>
    </location>
</feature>
<feature type="disulfide bond" evidence="1 3">
    <location>
        <begin position="236"/>
        <end position="256"/>
    </location>
</feature>